<gene>
    <name evidence="1" type="primary">infA</name>
    <name type="ordered locus">Psyc_1409</name>
</gene>
<evidence type="ECO:0000255" key="1">
    <source>
        <dbReference type="HAMAP-Rule" id="MF_00075"/>
    </source>
</evidence>
<evidence type="ECO:0000305" key="2"/>
<keyword id="KW-0963">Cytoplasm</keyword>
<keyword id="KW-0396">Initiation factor</keyword>
<keyword id="KW-0648">Protein biosynthesis</keyword>
<keyword id="KW-1185">Reference proteome</keyword>
<keyword id="KW-0694">RNA-binding</keyword>
<keyword id="KW-0699">rRNA-binding</keyword>
<proteinExistence type="inferred from homology"/>
<dbReference type="EMBL" id="CP000082">
    <property type="protein sequence ID" value="AAZ19257.1"/>
    <property type="status" value="ALT_INIT"/>
    <property type="molecule type" value="Genomic_DNA"/>
</dbReference>
<dbReference type="RefSeq" id="WP_010199824.1">
    <property type="nucleotide sequence ID" value="NC_007204.1"/>
</dbReference>
<dbReference type="SMR" id="Q4FRV1"/>
<dbReference type="STRING" id="259536.Psyc_1409"/>
<dbReference type="KEGG" id="par:Psyc_1409"/>
<dbReference type="eggNOG" id="COG0361">
    <property type="taxonomic scope" value="Bacteria"/>
</dbReference>
<dbReference type="HOGENOM" id="CLU_151267_1_0_6"/>
<dbReference type="Proteomes" id="UP000000546">
    <property type="component" value="Chromosome"/>
</dbReference>
<dbReference type="GO" id="GO:0005829">
    <property type="term" value="C:cytosol"/>
    <property type="evidence" value="ECO:0007669"/>
    <property type="project" value="TreeGrafter"/>
</dbReference>
<dbReference type="GO" id="GO:0043022">
    <property type="term" value="F:ribosome binding"/>
    <property type="evidence" value="ECO:0007669"/>
    <property type="project" value="UniProtKB-UniRule"/>
</dbReference>
<dbReference type="GO" id="GO:0019843">
    <property type="term" value="F:rRNA binding"/>
    <property type="evidence" value="ECO:0007669"/>
    <property type="project" value="UniProtKB-UniRule"/>
</dbReference>
<dbReference type="GO" id="GO:0003743">
    <property type="term" value="F:translation initiation factor activity"/>
    <property type="evidence" value="ECO:0007669"/>
    <property type="project" value="UniProtKB-UniRule"/>
</dbReference>
<dbReference type="CDD" id="cd04451">
    <property type="entry name" value="S1_IF1"/>
    <property type="match status" value="1"/>
</dbReference>
<dbReference type="FunFam" id="2.40.50.140:FF:000002">
    <property type="entry name" value="Translation initiation factor IF-1"/>
    <property type="match status" value="1"/>
</dbReference>
<dbReference type="Gene3D" id="2.40.50.140">
    <property type="entry name" value="Nucleic acid-binding proteins"/>
    <property type="match status" value="1"/>
</dbReference>
<dbReference type="HAMAP" id="MF_00075">
    <property type="entry name" value="IF_1"/>
    <property type="match status" value="1"/>
</dbReference>
<dbReference type="InterPro" id="IPR012340">
    <property type="entry name" value="NA-bd_OB-fold"/>
</dbReference>
<dbReference type="InterPro" id="IPR006196">
    <property type="entry name" value="RNA-binding_domain_S1_IF1"/>
</dbReference>
<dbReference type="InterPro" id="IPR003029">
    <property type="entry name" value="S1_domain"/>
</dbReference>
<dbReference type="InterPro" id="IPR004368">
    <property type="entry name" value="TIF_IF1"/>
</dbReference>
<dbReference type="NCBIfam" id="TIGR00008">
    <property type="entry name" value="infA"/>
    <property type="match status" value="1"/>
</dbReference>
<dbReference type="PANTHER" id="PTHR33370">
    <property type="entry name" value="TRANSLATION INITIATION FACTOR IF-1, CHLOROPLASTIC"/>
    <property type="match status" value="1"/>
</dbReference>
<dbReference type="PANTHER" id="PTHR33370:SF1">
    <property type="entry name" value="TRANSLATION INITIATION FACTOR IF-1, CHLOROPLASTIC"/>
    <property type="match status" value="1"/>
</dbReference>
<dbReference type="Pfam" id="PF01176">
    <property type="entry name" value="eIF-1a"/>
    <property type="match status" value="1"/>
</dbReference>
<dbReference type="SMART" id="SM00316">
    <property type="entry name" value="S1"/>
    <property type="match status" value="1"/>
</dbReference>
<dbReference type="SUPFAM" id="SSF50249">
    <property type="entry name" value="Nucleic acid-binding proteins"/>
    <property type="match status" value="1"/>
</dbReference>
<dbReference type="PROSITE" id="PS50832">
    <property type="entry name" value="S1_IF1_TYPE"/>
    <property type="match status" value="1"/>
</dbReference>
<reference key="1">
    <citation type="journal article" date="2010" name="Appl. Environ. Microbiol.">
        <title>The genome sequence of Psychrobacter arcticus 273-4, a psychroactive Siberian permafrost bacterium, reveals mechanisms for adaptation to low-temperature growth.</title>
        <authorList>
            <person name="Ayala-del-Rio H.L."/>
            <person name="Chain P.S."/>
            <person name="Grzymski J.J."/>
            <person name="Ponder M.A."/>
            <person name="Ivanova N."/>
            <person name="Bergholz P.W."/>
            <person name="Di Bartolo G."/>
            <person name="Hauser L."/>
            <person name="Land M."/>
            <person name="Bakermans C."/>
            <person name="Rodrigues D."/>
            <person name="Klappenbach J."/>
            <person name="Zarka D."/>
            <person name="Larimer F."/>
            <person name="Richardson P."/>
            <person name="Murray A."/>
            <person name="Thomashow M."/>
            <person name="Tiedje J.M."/>
        </authorList>
    </citation>
    <scope>NUCLEOTIDE SEQUENCE [LARGE SCALE GENOMIC DNA]</scope>
    <source>
        <strain>DSM 17307 / VKM B-2377 / 273-4</strain>
    </source>
</reference>
<feature type="chain" id="PRO_0000263844" description="Translation initiation factor IF-1">
    <location>
        <begin position="1"/>
        <end position="73"/>
    </location>
</feature>
<feature type="domain" description="S1-like" evidence="1">
    <location>
        <begin position="1"/>
        <end position="72"/>
    </location>
</feature>
<comment type="function">
    <text evidence="1">One of the essential components for the initiation of protein synthesis. Stabilizes the binding of IF-2 and IF-3 on the 30S subunit to which N-formylmethionyl-tRNA(fMet) subsequently binds. Helps modulate mRNA selection, yielding the 30S pre-initiation complex (PIC). Upon addition of the 50S ribosomal subunit IF-1, IF-2 and IF-3 are released leaving the mature 70S translation initiation complex.</text>
</comment>
<comment type="subunit">
    <text evidence="1">Component of the 30S ribosomal translation pre-initiation complex which assembles on the 30S ribosome in the order IF-2 and IF-3, IF-1 and N-formylmethionyl-tRNA(fMet); mRNA recruitment can occur at any time during PIC assembly.</text>
</comment>
<comment type="subcellular location">
    <subcellularLocation>
        <location evidence="1">Cytoplasm</location>
    </subcellularLocation>
</comment>
<comment type="similarity">
    <text evidence="1">Belongs to the IF-1 family.</text>
</comment>
<comment type="sequence caution" evidence="2">
    <conflict type="erroneous initiation">
        <sequence resource="EMBL-CDS" id="AAZ19257"/>
    </conflict>
    <text>Extended N-terminus.</text>
</comment>
<protein>
    <recommendedName>
        <fullName evidence="1">Translation initiation factor IF-1</fullName>
    </recommendedName>
</protein>
<accession>Q4FRV1</accession>
<name>IF1_PSYA2</name>
<organism>
    <name type="scientific">Psychrobacter arcticus (strain DSM 17307 / VKM B-2377 / 273-4)</name>
    <dbReference type="NCBI Taxonomy" id="259536"/>
    <lineage>
        <taxon>Bacteria</taxon>
        <taxon>Pseudomonadati</taxon>
        <taxon>Pseudomonadota</taxon>
        <taxon>Gammaproteobacteria</taxon>
        <taxon>Moraxellales</taxon>
        <taxon>Moraxellaceae</taxon>
        <taxon>Psychrobacter</taxon>
    </lineage>
</organism>
<sequence>MAKDEIIEFEGEVIDTLPNTLFKVRLENGHEIIAHISGKMRKHYIRILTGDKVKVEMTPYDLSKGRITYRGKN</sequence>